<feature type="chain" id="PRO_0000184664" description="Testis-specific basic protein Y 2">
    <location>
        <begin position="1"/>
        <end position="106"/>
    </location>
</feature>
<feature type="sequence conflict" description="In Ref. 1; AAC51828." evidence="4" ref="1">
    <original>R</original>
    <variation>K</variation>
    <location>
        <position position="101"/>
    </location>
</feature>
<proteinExistence type="evidence at protein level"/>
<organism>
    <name type="scientific">Homo sapiens</name>
    <name type="common">Human</name>
    <dbReference type="NCBI Taxonomy" id="9606"/>
    <lineage>
        <taxon>Eukaryota</taxon>
        <taxon>Metazoa</taxon>
        <taxon>Chordata</taxon>
        <taxon>Craniata</taxon>
        <taxon>Vertebrata</taxon>
        <taxon>Euteleostomi</taxon>
        <taxon>Mammalia</taxon>
        <taxon>Eutheria</taxon>
        <taxon>Euarchontoglires</taxon>
        <taxon>Primates</taxon>
        <taxon>Haplorrhini</taxon>
        <taxon>Catarrhini</taxon>
        <taxon>Hominidae</taxon>
        <taxon>Homo</taxon>
    </lineage>
</organism>
<gene>
    <name type="primary">BPY2</name>
    <name type="synonym">BPY2A</name>
    <name type="synonym">VCY2</name>
    <name type="synonym">VCY2A</name>
</gene>
<gene>
    <name type="primary">BPY2B</name>
    <name type="synonym">VCY2B</name>
</gene>
<gene>
    <name type="primary">BPY2C</name>
    <name type="synonym">VCY2C</name>
</gene>
<protein>
    <recommendedName>
        <fullName>Testis-specific basic protein Y 2</fullName>
    </recommendedName>
    <alternativeName>
        <fullName>Basic charge, Y-linked 2</fullName>
    </alternativeName>
    <alternativeName>
        <fullName>Variably charged protein Y 2</fullName>
    </alternativeName>
</protein>
<keyword id="KW-1185">Reference proteome</keyword>
<evidence type="ECO:0000269" key="1">
    <source>
    </source>
</evidence>
<evidence type="ECO:0000269" key="2">
    <source>
    </source>
</evidence>
<evidence type="ECO:0000269" key="3">
    <source>
    </source>
</evidence>
<evidence type="ECO:0000305" key="4"/>
<accession>O14599</accession>
<name>VCY2_HUMAN</name>
<comment type="subunit">
    <text evidence="1 3">Interacts with MAP1S. Interacts with UBE3A (via HECT domain).</text>
</comment>
<comment type="interaction">
    <interactant intactId="EBI-2133713">
        <id>O14599</id>
    </interactant>
    <interactant intactId="EBI-2133734">
        <id>Q66K74</id>
        <label>MAP1S</label>
    </interactant>
    <organismsDiffer>false</organismsDiffer>
    <experiments>3</experiments>
</comment>
<comment type="tissue specificity">
    <text evidence="1 2 3">Expressed exclusively in testis. Expressed in ejaculated spermatozoa of germ cell. Expressed in the nuclei of spermatogonia, spermatocytes, and round spermatids, except elongated spermatids (at protein level).</text>
</comment>
<comment type="similarity">
    <text evidence="4">Belongs to the VCX/VCY family.</text>
</comment>
<dbReference type="EMBL" id="AF000980">
    <property type="protein sequence ID" value="AAC51828.1"/>
    <property type="molecule type" value="mRNA"/>
</dbReference>
<dbReference type="EMBL" id="AC016728">
    <property type="status" value="NOT_ANNOTATED_CDS"/>
    <property type="molecule type" value="Genomic_DNA"/>
</dbReference>
<dbReference type="CCDS" id="CCDS14800.1"/>
<dbReference type="CCDS" id="CCDS44029.1"/>
<dbReference type="CCDS" id="CCDS44030.1"/>
<dbReference type="RefSeq" id="NP_001002760.1">
    <property type="nucleotide sequence ID" value="NM_001002760.1"/>
</dbReference>
<dbReference type="RefSeq" id="NP_001002761.1">
    <property type="nucleotide sequence ID" value="NM_001002761.1"/>
</dbReference>
<dbReference type="RefSeq" id="NP_004669.2">
    <property type="nucleotide sequence ID" value="NM_004678.3"/>
</dbReference>
<dbReference type="BioGRID" id="114539">
    <property type="interactions" value="3"/>
</dbReference>
<dbReference type="BioGRID" id="138582">
    <property type="interactions" value="1"/>
</dbReference>
<dbReference type="FunCoup" id="O14599">
    <property type="interactions" value="23"/>
</dbReference>
<dbReference type="IntAct" id="O14599">
    <property type="interactions" value="2"/>
</dbReference>
<dbReference type="STRING" id="9606.ENSP00000329106"/>
<dbReference type="BioMuta" id="BPY2"/>
<dbReference type="Antibodypedia" id="58341">
    <property type="antibodies" value="16 antibodies from 7 providers"/>
</dbReference>
<dbReference type="Antibodypedia" id="65754">
    <property type="antibodies" value="1 antibodies from 1 providers"/>
</dbReference>
<dbReference type="Antibodypedia" id="70562">
    <property type="antibodies" value="31 antibodies from 3 providers"/>
</dbReference>
<dbReference type="DNASU" id="442867"/>
<dbReference type="Ensembl" id="ENST00000331070.8">
    <property type="protein sequence ID" value="ENSP00000329106.3"/>
    <property type="gene ID" value="ENSG00000183753.10"/>
</dbReference>
<dbReference type="Ensembl" id="ENST00000382287.5">
    <property type="protein sequence ID" value="ENSP00000371724.1"/>
    <property type="gene ID" value="ENSG00000185894.8"/>
</dbReference>
<dbReference type="Ensembl" id="ENST00000382392.5">
    <property type="protein sequence ID" value="ENSP00000371829.1"/>
    <property type="gene ID" value="ENSG00000183795.8"/>
</dbReference>
<dbReference type="Ensembl" id="ENST00000382585.2">
    <property type="protein sequence ID" value="ENSP00000372028.1"/>
    <property type="gene ID" value="ENSG00000183753.10"/>
</dbReference>
<dbReference type="Ensembl" id="ENST00000615850.1">
    <property type="protein sequence ID" value="ENSP00000480184.1"/>
    <property type="gene ID" value="ENSG00000183795.8"/>
</dbReference>
<dbReference type="Ensembl" id="ENST00000618574.1">
    <property type="protein sequence ID" value="ENSP00000480751.1"/>
    <property type="gene ID" value="ENSG00000185894.8"/>
</dbReference>
<dbReference type="GeneID" id="442867"/>
<dbReference type="GeneID" id="442868"/>
<dbReference type="GeneID" id="9083"/>
<dbReference type="KEGG" id="hsa:442867"/>
<dbReference type="KEGG" id="hsa:442868"/>
<dbReference type="KEGG" id="hsa:9083"/>
<dbReference type="MANE-Select" id="ENST00000331070.8">
    <property type="protein sequence ID" value="ENSP00000329106.3"/>
    <property type="RefSeq nucleotide sequence ID" value="NM_004678.3"/>
    <property type="RefSeq protein sequence ID" value="NP_004669.2"/>
</dbReference>
<dbReference type="MANE-Select" id="ENST00000382287.5">
    <property type="protein sequence ID" value="ENSP00000371724.1"/>
    <property type="RefSeq nucleotide sequence ID" value="NM_001002761.1"/>
    <property type="RefSeq protein sequence ID" value="NP_001002761.1"/>
</dbReference>
<dbReference type="MANE-Select" id="ENST00000382392.5">
    <property type="protein sequence ID" value="ENSP00000371829.1"/>
    <property type="RefSeq nucleotide sequence ID" value="NM_001002760.1"/>
    <property type="RefSeq protein sequence ID" value="NP_001002760.1"/>
</dbReference>
<dbReference type="UCSC" id="uc004fwi.4">
    <property type="organism name" value="human"/>
</dbReference>
<dbReference type="AGR" id="HGNC:13508"/>
<dbReference type="AGR" id="HGNC:18225"/>
<dbReference type="AGR" id="HGNC:25449"/>
<dbReference type="CTD" id="442867"/>
<dbReference type="CTD" id="442868"/>
<dbReference type="CTD" id="9083"/>
<dbReference type="DisGeNET" id="442867"/>
<dbReference type="DisGeNET" id="442868"/>
<dbReference type="DisGeNET" id="9083"/>
<dbReference type="GeneCards" id="BPY2"/>
<dbReference type="GeneCards" id="BPY2B"/>
<dbReference type="GeneCards" id="BPY2C"/>
<dbReference type="GeneReviews" id="BPY2"/>
<dbReference type="HGNC" id="HGNC:13508">
    <property type="gene designation" value="BPY2"/>
</dbReference>
<dbReference type="HGNC" id="HGNC:25449">
    <property type="gene designation" value="BPY2B"/>
</dbReference>
<dbReference type="HGNC" id="HGNC:18225">
    <property type="gene designation" value="BPY2C"/>
</dbReference>
<dbReference type="HPA" id="ENSG00000183753">
    <property type="expression patterns" value="Tissue enriched (testis)"/>
</dbReference>
<dbReference type="HPA" id="ENSG00000183795">
    <property type="expression patterns" value="Tissue enriched (testis)"/>
</dbReference>
<dbReference type="HPA" id="ENSG00000185894">
    <property type="expression patterns" value="Tissue enriched (testis)"/>
</dbReference>
<dbReference type="MIM" id="400013">
    <property type="type" value="gene"/>
</dbReference>
<dbReference type="neXtProt" id="NX_O14599"/>
<dbReference type="OpenTargets" id="ENSG00000183753"/>
<dbReference type="PharmGKB" id="PA37794"/>
<dbReference type="VEuPathDB" id="HostDB:ENSG00000183753"/>
<dbReference type="VEuPathDB" id="HostDB:ENSG00000183795"/>
<dbReference type="VEuPathDB" id="HostDB:ENSG00000185894"/>
<dbReference type="GeneTree" id="ENSGT00390000015738"/>
<dbReference type="HOGENOM" id="CLU_2283759_0_0_1"/>
<dbReference type="InParanoid" id="O14599"/>
<dbReference type="PAN-GO" id="O14599">
    <property type="GO annotations" value="2 GO annotations based on evolutionary models"/>
</dbReference>
<dbReference type="PhylomeDB" id="O14599"/>
<dbReference type="TreeFam" id="TF342588"/>
<dbReference type="PathwayCommons" id="O14599"/>
<dbReference type="SignaLink" id="O14599"/>
<dbReference type="BioGRID-ORCS" id="442867">
    <property type="hits" value="8 hits in 186 CRISPR screens"/>
</dbReference>
<dbReference type="BioGRID-ORCS" id="442868">
    <property type="hits" value="13 hits in 600 CRISPR screens"/>
</dbReference>
<dbReference type="BioGRID-ORCS" id="9083">
    <property type="hits" value="17 hits in 260 CRISPR screens"/>
</dbReference>
<dbReference type="GeneWiki" id="BPY2"/>
<dbReference type="Pharos" id="O14599">
    <property type="development level" value="Tbio"/>
</dbReference>
<dbReference type="PRO" id="PR:O14599"/>
<dbReference type="Proteomes" id="UP000005640">
    <property type="component" value="Chromosome Y"/>
</dbReference>
<dbReference type="RNAct" id="O14599">
    <property type="molecule type" value="protein"/>
</dbReference>
<dbReference type="Bgee" id="ENSG00000183753">
    <property type="expression patterns" value="Expressed in left testis and 13 other cell types or tissues"/>
</dbReference>
<dbReference type="ExpressionAtlas" id="O14599">
    <property type="expression patterns" value="baseline"/>
</dbReference>
<dbReference type="GO" id="GO:0005634">
    <property type="term" value="C:nucleus"/>
    <property type="evidence" value="ECO:0000314"/>
    <property type="project" value="HGNC-UCL"/>
</dbReference>
<dbReference type="GO" id="GO:0032399">
    <property type="term" value="F:HECT domain binding"/>
    <property type="evidence" value="ECO:0000353"/>
    <property type="project" value="HGNC-UCL"/>
</dbReference>
<dbReference type="GO" id="GO:0007338">
    <property type="term" value="P:single fertilization"/>
    <property type="evidence" value="ECO:0000304"/>
    <property type="project" value="ProtInc"/>
</dbReference>
<dbReference type="GO" id="GO:0007283">
    <property type="term" value="P:spermatogenesis"/>
    <property type="evidence" value="ECO:0000315"/>
    <property type="project" value="HGNC-UCL"/>
</dbReference>
<reference key="1">
    <citation type="journal article" date="1997" name="Science">
        <title>Functional coherence of the human Y chromosome.</title>
        <authorList>
            <person name="Lahn B.T."/>
            <person name="Page D.C."/>
        </authorList>
    </citation>
    <scope>NUCLEOTIDE SEQUENCE [MRNA]</scope>
</reference>
<reference key="2">
    <citation type="journal article" date="2003" name="Nature">
        <title>The male-specific region of the human Y chromosome is a mosaic of discrete sequence classes.</title>
        <authorList>
            <person name="Skaletsky H."/>
            <person name="Kuroda-Kawaguchi T."/>
            <person name="Minx P.J."/>
            <person name="Cordum H.S."/>
            <person name="Hillier L.W."/>
            <person name="Brown L.G."/>
            <person name="Repping S."/>
            <person name="Pyntikova T."/>
            <person name="Ali J."/>
            <person name="Bieri T."/>
            <person name="Chinwalla A."/>
            <person name="Delehaunty A."/>
            <person name="Delehaunty K."/>
            <person name="Du H."/>
            <person name="Fewell G."/>
            <person name="Fulton L."/>
            <person name="Fulton R."/>
            <person name="Graves T.A."/>
            <person name="Hou S.-F."/>
            <person name="Latrielle P."/>
            <person name="Leonard S."/>
            <person name="Mardis E."/>
            <person name="Maupin R."/>
            <person name="McPherson J."/>
            <person name="Miner T."/>
            <person name="Nash W."/>
            <person name="Nguyen C."/>
            <person name="Ozersky P."/>
            <person name="Pepin K."/>
            <person name="Rock S."/>
            <person name="Rohlfing T."/>
            <person name="Scott K."/>
            <person name="Schultz B."/>
            <person name="Strong C."/>
            <person name="Tin-Wollam A."/>
            <person name="Yang S.-P."/>
            <person name="Waterston R.H."/>
            <person name="Wilson R.K."/>
            <person name="Rozen S."/>
            <person name="Page D.C."/>
        </authorList>
    </citation>
    <scope>NUCLEOTIDE SEQUENCE [LARGE SCALE GENOMIC DNA]</scope>
</reference>
<reference key="3">
    <citation type="journal article" date="2002" name="Biochem. Biophys. Res. Commun.">
        <title>VCY2 protein interacts with the HECT domain of ubiquitin-protein ligase E3A.</title>
        <authorList>
            <person name="Wong E.Y."/>
            <person name="Tse J.Y."/>
            <person name="Yao K.M."/>
            <person name="Tam P.C."/>
            <person name="Yeung W.S."/>
        </authorList>
    </citation>
    <scope>INTERACTION WITH UBE3A</scope>
    <scope>TISSUE SPECIFICITY</scope>
</reference>
<reference key="4">
    <citation type="journal article" date="2003" name="Biol. Reprod.">
        <title>Specific expression of VCY2 in human male germ cells and its involvement in the pathogenesis of male infertility.</title>
        <authorList>
            <person name="Tse J.Y."/>
            <person name="Wong E.Y."/>
            <person name="Cheung A.N."/>
            <person name="O W.S."/>
            <person name="Tam P.C."/>
            <person name="Yeung W.S."/>
        </authorList>
    </citation>
    <scope>TISSUE SPECIFICITY</scope>
</reference>
<reference key="5">
    <citation type="journal article" date="2004" name="Biol. Reprod.">
        <title>Identification and characterization of a VCY2 interacting protein-1; VCY2IP-1, a MAP-like protein.</title>
        <authorList>
            <person name="Wong E.Y."/>
            <person name="Tse J.Y."/>
            <person name="Yao K.-M."/>
            <person name="Lui V.C."/>
            <person name="Tam P.-C."/>
            <person name="Yeung W.S."/>
        </authorList>
    </citation>
    <scope>INTERACTION WITH MAP1S</scope>
    <scope>TISSUE SPECIFICITY</scope>
</reference>
<sequence>MMTLVPRARTRAGQDHYSHPCPRFSQVLLTEGIMTYCLTKNLSDVNILHRLLKNGNVRNTLLQSKVGLLTYYVKLYPGEVTLLTRPSIQMRLCCITGSVSRPRSQK</sequence>